<evidence type="ECO:0000255" key="1">
    <source>
        <dbReference type="HAMAP-Rule" id="MF_00227"/>
    </source>
</evidence>
<comment type="function">
    <text evidence="1">RNaseP catalyzes the removal of the 5'-leader sequence from pre-tRNA to produce the mature 5'-terminus. It can also cleave other RNA substrates such as 4.5S RNA. The protein component plays an auxiliary but essential role in vivo by binding to the 5'-leader sequence and broadening the substrate specificity of the ribozyme.</text>
</comment>
<comment type="catalytic activity">
    <reaction evidence="1">
        <text>Endonucleolytic cleavage of RNA, removing 5'-extranucleotides from tRNA precursor.</text>
        <dbReference type="EC" id="3.1.26.5"/>
    </reaction>
</comment>
<comment type="subunit">
    <text evidence="1">Consists of a catalytic RNA component (M1 or rnpB) and a protein subunit.</text>
</comment>
<comment type="similarity">
    <text evidence="1">Belongs to the RnpA family.</text>
</comment>
<keyword id="KW-0255">Endonuclease</keyword>
<keyword id="KW-0378">Hydrolase</keyword>
<keyword id="KW-0540">Nuclease</keyword>
<keyword id="KW-0694">RNA-binding</keyword>
<keyword id="KW-0819">tRNA processing</keyword>
<sequence length="126" mass="13862">MLPEPSRLRRHADFSVAVRRGRRMGRRDLVVHAFDREQVEALVVTNHGPRFGLIVSKAVGPAVIRHRVARRLRHICADFVGQVSPETDVVIRALPGAATASSAELAKQLRGGLTKMNLLVSVSEEP</sequence>
<organism>
    <name type="scientific">Rhodococcus erythropolis (strain PR4 / NBRC 100887)</name>
    <dbReference type="NCBI Taxonomy" id="234621"/>
    <lineage>
        <taxon>Bacteria</taxon>
        <taxon>Bacillati</taxon>
        <taxon>Actinomycetota</taxon>
        <taxon>Actinomycetes</taxon>
        <taxon>Mycobacteriales</taxon>
        <taxon>Nocardiaceae</taxon>
        <taxon>Rhodococcus</taxon>
        <taxon>Rhodococcus erythropolis group</taxon>
    </lineage>
</organism>
<protein>
    <recommendedName>
        <fullName evidence="1">Ribonuclease P protein component</fullName>
        <shortName evidence="1">RNase P protein</shortName>
        <shortName evidence="1">RNaseP protein</shortName>
        <ecNumber evidence="1">3.1.26.5</ecNumber>
    </recommendedName>
    <alternativeName>
        <fullName evidence="1">Protein C5</fullName>
    </alternativeName>
</protein>
<proteinExistence type="inferred from homology"/>
<feature type="chain" id="PRO_1000204352" description="Ribonuclease P protein component">
    <location>
        <begin position="1"/>
        <end position="126"/>
    </location>
</feature>
<reference key="1">
    <citation type="submission" date="2005-03" db="EMBL/GenBank/DDBJ databases">
        <title>Comparison of the complete genome sequences of Rhodococcus erythropolis PR4 and Rhodococcus opacus B4.</title>
        <authorList>
            <person name="Takarada H."/>
            <person name="Sekine M."/>
            <person name="Hosoyama A."/>
            <person name="Yamada R."/>
            <person name="Fujisawa T."/>
            <person name="Omata S."/>
            <person name="Shimizu A."/>
            <person name="Tsukatani N."/>
            <person name="Tanikawa S."/>
            <person name="Fujita N."/>
            <person name="Harayama S."/>
        </authorList>
    </citation>
    <scope>NUCLEOTIDE SEQUENCE [LARGE SCALE GENOMIC DNA]</scope>
    <source>
        <strain>PR4 / NBRC 100887</strain>
    </source>
</reference>
<gene>
    <name evidence="1" type="primary">rnpA</name>
    <name type="ordered locus">RER_60330</name>
</gene>
<accession>C0ZVP7</accession>
<name>RNPA_RHOE4</name>
<dbReference type="EC" id="3.1.26.5" evidence="1"/>
<dbReference type="EMBL" id="AP008957">
    <property type="protein sequence ID" value="BAH36741.1"/>
    <property type="molecule type" value="Genomic_DNA"/>
</dbReference>
<dbReference type="RefSeq" id="WP_019746209.1">
    <property type="nucleotide sequence ID" value="NC_012490.1"/>
</dbReference>
<dbReference type="SMR" id="C0ZVP7"/>
<dbReference type="GeneID" id="57484114"/>
<dbReference type="KEGG" id="rer:RER_60330"/>
<dbReference type="eggNOG" id="COG0594">
    <property type="taxonomic scope" value="Bacteria"/>
</dbReference>
<dbReference type="HOGENOM" id="CLU_117179_4_1_11"/>
<dbReference type="Proteomes" id="UP000002204">
    <property type="component" value="Chromosome"/>
</dbReference>
<dbReference type="GO" id="GO:0030677">
    <property type="term" value="C:ribonuclease P complex"/>
    <property type="evidence" value="ECO:0007669"/>
    <property type="project" value="TreeGrafter"/>
</dbReference>
<dbReference type="GO" id="GO:0042781">
    <property type="term" value="F:3'-tRNA processing endoribonuclease activity"/>
    <property type="evidence" value="ECO:0007669"/>
    <property type="project" value="TreeGrafter"/>
</dbReference>
<dbReference type="GO" id="GO:0004526">
    <property type="term" value="F:ribonuclease P activity"/>
    <property type="evidence" value="ECO:0007669"/>
    <property type="project" value="UniProtKB-UniRule"/>
</dbReference>
<dbReference type="GO" id="GO:0000049">
    <property type="term" value="F:tRNA binding"/>
    <property type="evidence" value="ECO:0007669"/>
    <property type="project" value="UniProtKB-UniRule"/>
</dbReference>
<dbReference type="GO" id="GO:0001682">
    <property type="term" value="P:tRNA 5'-leader removal"/>
    <property type="evidence" value="ECO:0007669"/>
    <property type="project" value="UniProtKB-UniRule"/>
</dbReference>
<dbReference type="Gene3D" id="3.30.230.10">
    <property type="match status" value="1"/>
</dbReference>
<dbReference type="HAMAP" id="MF_00227">
    <property type="entry name" value="RNase_P"/>
    <property type="match status" value="1"/>
</dbReference>
<dbReference type="InterPro" id="IPR020568">
    <property type="entry name" value="Ribosomal_Su5_D2-typ_SF"/>
</dbReference>
<dbReference type="InterPro" id="IPR014721">
    <property type="entry name" value="Ribsml_uS5_D2-typ_fold_subgr"/>
</dbReference>
<dbReference type="InterPro" id="IPR000100">
    <property type="entry name" value="RNase_P"/>
</dbReference>
<dbReference type="InterPro" id="IPR020539">
    <property type="entry name" value="RNase_P_CS"/>
</dbReference>
<dbReference type="NCBIfam" id="TIGR00188">
    <property type="entry name" value="rnpA"/>
    <property type="match status" value="1"/>
</dbReference>
<dbReference type="PANTHER" id="PTHR33992">
    <property type="entry name" value="RIBONUCLEASE P PROTEIN COMPONENT"/>
    <property type="match status" value="1"/>
</dbReference>
<dbReference type="PANTHER" id="PTHR33992:SF1">
    <property type="entry name" value="RIBONUCLEASE P PROTEIN COMPONENT"/>
    <property type="match status" value="1"/>
</dbReference>
<dbReference type="Pfam" id="PF00825">
    <property type="entry name" value="Ribonuclease_P"/>
    <property type="match status" value="1"/>
</dbReference>
<dbReference type="SUPFAM" id="SSF54211">
    <property type="entry name" value="Ribosomal protein S5 domain 2-like"/>
    <property type="match status" value="1"/>
</dbReference>
<dbReference type="PROSITE" id="PS00648">
    <property type="entry name" value="RIBONUCLEASE_P"/>
    <property type="match status" value="1"/>
</dbReference>